<dbReference type="EC" id="2.7.4.3" evidence="1"/>
<dbReference type="EMBL" id="AP006840">
    <property type="protein sequence ID" value="BAD42036.1"/>
    <property type="molecule type" value="Genomic_DNA"/>
</dbReference>
<dbReference type="RefSeq" id="WP_011197169.1">
    <property type="nucleotide sequence ID" value="NC_006177.1"/>
</dbReference>
<dbReference type="SMR" id="Q67JW4"/>
<dbReference type="STRING" id="292459.STH3054"/>
<dbReference type="KEGG" id="sth:STH3054"/>
<dbReference type="eggNOG" id="COG0563">
    <property type="taxonomic scope" value="Bacteria"/>
</dbReference>
<dbReference type="HOGENOM" id="CLU_032354_1_2_9"/>
<dbReference type="OrthoDB" id="9805030at2"/>
<dbReference type="UniPathway" id="UPA00588">
    <property type="reaction ID" value="UER00649"/>
</dbReference>
<dbReference type="Proteomes" id="UP000000417">
    <property type="component" value="Chromosome"/>
</dbReference>
<dbReference type="GO" id="GO:0005737">
    <property type="term" value="C:cytoplasm"/>
    <property type="evidence" value="ECO:0007669"/>
    <property type="project" value="UniProtKB-SubCell"/>
</dbReference>
<dbReference type="GO" id="GO:0004017">
    <property type="term" value="F:adenylate kinase activity"/>
    <property type="evidence" value="ECO:0007669"/>
    <property type="project" value="UniProtKB-UniRule"/>
</dbReference>
<dbReference type="GO" id="GO:0005524">
    <property type="term" value="F:ATP binding"/>
    <property type="evidence" value="ECO:0007669"/>
    <property type="project" value="UniProtKB-UniRule"/>
</dbReference>
<dbReference type="GO" id="GO:0008270">
    <property type="term" value="F:zinc ion binding"/>
    <property type="evidence" value="ECO:0007669"/>
    <property type="project" value="UniProtKB-UniRule"/>
</dbReference>
<dbReference type="GO" id="GO:0044209">
    <property type="term" value="P:AMP salvage"/>
    <property type="evidence" value="ECO:0007669"/>
    <property type="project" value="UniProtKB-UniRule"/>
</dbReference>
<dbReference type="CDD" id="cd01428">
    <property type="entry name" value="ADK"/>
    <property type="match status" value="1"/>
</dbReference>
<dbReference type="FunFam" id="3.40.50.300:FF:000106">
    <property type="entry name" value="Adenylate kinase mitochondrial"/>
    <property type="match status" value="1"/>
</dbReference>
<dbReference type="Gene3D" id="3.40.50.300">
    <property type="entry name" value="P-loop containing nucleotide triphosphate hydrolases"/>
    <property type="match status" value="1"/>
</dbReference>
<dbReference type="HAMAP" id="MF_00235">
    <property type="entry name" value="Adenylate_kinase_Adk"/>
    <property type="match status" value="1"/>
</dbReference>
<dbReference type="InterPro" id="IPR006259">
    <property type="entry name" value="Adenyl_kin_sub"/>
</dbReference>
<dbReference type="InterPro" id="IPR000850">
    <property type="entry name" value="Adenylat/UMP-CMP_kin"/>
</dbReference>
<dbReference type="InterPro" id="IPR033690">
    <property type="entry name" value="Adenylat_kinase_CS"/>
</dbReference>
<dbReference type="InterPro" id="IPR007862">
    <property type="entry name" value="Adenylate_kinase_lid-dom"/>
</dbReference>
<dbReference type="InterPro" id="IPR027417">
    <property type="entry name" value="P-loop_NTPase"/>
</dbReference>
<dbReference type="NCBIfam" id="TIGR01351">
    <property type="entry name" value="adk"/>
    <property type="match status" value="1"/>
</dbReference>
<dbReference type="NCBIfam" id="NF001380">
    <property type="entry name" value="PRK00279.1-2"/>
    <property type="match status" value="1"/>
</dbReference>
<dbReference type="NCBIfam" id="NF001381">
    <property type="entry name" value="PRK00279.1-3"/>
    <property type="match status" value="1"/>
</dbReference>
<dbReference type="NCBIfam" id="NF011100">
    <property type="entry name" value="PRK14527.1"/>
    <property type="match status" value="1"/>
</dbReference>
<dbReference type="PANTHER" id="PTHR23359">
    <property type="entry name" value="NUCLEOTIDE KINASE"/>
    <property type="match status" value="1"/>
</dbReference>
<dbReference type="Pfam" id="PF00406">
    <property type="entry name" value="ADK"/>
    <property type="match status" value="1"/>
</dbReference>
<dbReference type="Pfam" id="PF05191">
    <property type="entry name" value="ADK_lid"/>
    <property type="match status" value="1"/>
</dbReference>
<dbReference type="PRINTS" id="PR00094">
    <property type="entry name" value="ADENYLTKNASE"/>
</dbReference>
<dbReference type="SUPFAM" id="SSF52540">
    <property type="entry name" value="P-loop containing nucleoside triphosphate hydrolases"/>
    <property type="match status" value="1"/>
</dbReference>
<dbReference type="PROSITE" id="PS00113">
    <property type="entry name" value="ADENYLATE_KINASE"/>
    <property type="match status" value="1"/>
</dbReference>
<keyword id="KW-0067">ATP-binding</keyword>
<keyword id="KW-0963">Cytoplasm</keyword>
<keyword id="KW-0418">Kinase</keyword>
<keyword id="KW-0479">Metal-binding</keyword>
<keyword id="KW-0545">Nucleotide biosynthesis</keyword>
<keyword id="KW-0547">Nucleotide-binding</keyword>
<keyword id="KW-1185">Reference proteome</keyword>
<keyword id="KW-0808">Transferase</keyword>
<keyword id="KW-0862">Zinc</keyword>
<reference key="1">
    <citation type="journal article" date="2004" name="Nucleic Acids Res.">
        <title>Genome sequence of Symbiobacterium thermophilum, an uncultivable bacterium that depends on microbial commensalism.</title>
        <authorList>
            <person name="Ueda K."/>
            <person name="Yamashita A."/>
            <person name="Ishikawa J."/>
            <person name="Shimada M."/>
            <person name="Watsuji T."/>
            <person name="Morimura K."/>
            <person name="Ikeda H."/>
            <person name="Hattori M."/>
            <person name="Beppu T."/>
        </authorList>
    </citation>
    <scope>NUCLEOTIDE SEQUENCE [LARGE SCALE GENOMIC DNA]</scope>
    <source>
        <strain>DSM 24528 / JCM 14929 / IAM 14863 / T</strain>
    </source>
</reference>
<organism>
    <name type="scientific">Symbiobacterium thermophilum (strain DSM 24528 / JCM 14929 / IAM 14863 / T)</name>
    <dbReference type="NCBI Taxonomy" id="292459"/>
    <lineage>
        <taxon>Bacteria</taxon>
        <taxon>Bacillati</taxon>
        <taxon>Bacillota</taxon>
        <taxon>Clostridia</taxon>
        <taxon>Eubacteriales</taxon>
        <taxon>Symbiobacteriaceae</taxon>
        <taxon>Symbiobacterium</taxon>
    </lineage>
</organism>
<evidence type="ECO:0000255" key="1">
    <source>
        <dbReference type="HAMAP-Rule" id="MF_00235"/>
    </source>
</evidence>
<name>KAD_SYMTH</name>
<proteinExistence type="inferred from homology"/>
<comment type="function">
    <text evidence="1">Catalyzes the reversible transfer of the terminal phosphate group between ATP and AMP. Plays an important role in cellular energy homeostasis and in adenine nucleotide metabolism.</text>
</comment>
<comment type="catalytic activity">
    <reaction evidence="1">
        <text>AMP + ATP = 2 ADP</text>
        <dbReference type="Rhea" id="RHEA:12973"/>
        <dbReference type="ChEBI" id="CHEBI:30616"/>
        <dbReference type="ChEBI" id="CHEBI:456215"/>
        <dbReference type="ChEBI" id="CHEBI:456216"/>
        <dbReference type="EC" id="2.7.4.3"/>
    </reaction>
</comment>
<comment type="pathway">
    <text evidence="1">Purine metabolism; AMP biosynthesis via salvage pathway; AMP from ADP: step 1/1.</text>
</comment>
<comment type="subunit">
    <text evidence="1">Monomer.</text>
</comment>
<comment type="subcellular location">
    <subcellularLocation>
        <location evidence="1">Cytoplasm</location>
    </subcellularLocation>
</comment>
<comment type="domain">
    <text evidence="1">Consists of three domains, a large central CORE domain and two small peripheral domains, NMPbind and LID, which undergo movements during catalysis. The LID domain closes over the site of phosphoryl transfer upon ATP binding. Assembling and dissambling the active center during each catalytic cycle provides an effective means to prevent ATP hydrolysis. Some bacteria have evolved a zinc-coordinating structure that stabilizes the LID domain.</text>
</comment>
<comment type="similarity">
    <text evidence="1">Belongs to the adenylate kinase family.</text>
</comment>
<protein>
    <recommendedName>
        <fullName evidence="1">Adenylate kinase</fullName>
        <shortName evidence="1">AK</shortName>
        <ecNumber evidence="1">2.7.4.3</ecNumber>
    </recommendedName>
    <alternativeName>
        <fullName evidence="1">ATP-AMP transphosphorylase</fullName>
    </alternativeName>
    <alternativeName>
        <fullName evidence="1">ATP:AMP phosphotransferase</fullName>
    </alternativeName>
    <alternativeName>
        <fullName evidence="1">Adenylate monophosphate kinase</fullName>
    </alternativeName>
</protein>
<accession>Q67JW4</accession>
<feature type="chain" id="PRO_0000158867" description="Adenylate kinase">
    <location>
        <begin position="1"/>
        <end position="216"/>
    </location>
</feature>
<feature type="region of interest" description="NMP" evidence="1">
    <location>
        <begin position="30"/>
        <end position="59"/>
    </location>
</feature>
<feature type="region of interest" description="LID" evidence="1">
    <location>
        <begin position="126"/>
        <end position="163"/>
    </location>
</feature>
<feature type="binding site" evidence="1">
    <location>
        <begin position="10"/>
        <end position="15"/>
    </location>
    <ligand>
        <name>ATP</name>
        <dbReference type="ChEBI" id="CHEBI:30616"/>
    </ligand>
</feature>
<feature type="binding site" evidence="1">
    <location>
        <position position="31"/>
    </location>
    <ligand>
        <name>AMP</name>
        <dbReference type="ChEBI" id="CHEBI:456215"/>
    </ligand>
</feature>
<feature type="binding site" evidence="1">
    <location>
        <position position="36"/>
    </location>
    <ligand>
        <name>AMP</name>
        <dbReference type="ChEBI" id="CHEBI:456215"/>
    </ligand>
</feature>
<feature type="binding site" evidence="1">
    <location>
        <begin position="57"/>
        <end position="59"/>
    </location>
    <ligand>
        <name>AMP</name>
        <dbReference type="ChEBI" id="CHEBI:456215"/>
    </ligand>
</feature>
<feature type="binding site" evidence="1">
    <location>
        <begin position="85"/>
        <end position="88"/>
    </location>
    <ligand>
        <name>AMP</name>
        <dbReference type="ChEBI" id="CHEBI:456215"/>
    </ligand>
</feature>
<feature type="binding site" evidence="1">
    <location>
        <position position="92"/>
    </location>
    <ligand>
        <name>AMP</name>
        <dbReference type="ChEBI" id="CHEBI:456215"/>
    </ligand>
</feature>
<feature type="binding site" evidence="1">
    <location>
        <position position="127"/>
    </location>
    <ligand>
        <name>ATP</name>
        <dbReference type="ChEBI" id="CHEBI:30616"/>
    </ligand>
</feature>
<feature type="binding site" evidence="1">
    <location>
        <position position="130"/>
    </location>
    <ligand>
        <name>Zn(2+)</name>
        <dbReference type="ChEBI" id="CHEBI:29105"/>
        <note>structural</note>
    </ligand>
</feature>
<feature type="binding site" evidence="1">
    <location>
        <position position="133"/>
    </location>
    <ligand>
        <name>Zn(2+)</name>
        <dbReference type="ChEBI" id="CHEBI:29105"/>
        <note>structural</note>
    </ligand>
</feature>
<feature type="binding site" evidence="1">
    <location>
        <begin position="136"/>
        <end position="137"/>
    </location>
    <ligand>
        <name>ATP</name>
        <dbReference type="ChEBI" id="CHEBI:30616"/>
    </ligand>
</feature>
<feature type="binding site" evidence="1">
    <location>
        <position position="150"/>
    </location>
    <ligand>
        <name>Zn(2+)</name>
        <dbReference type="ChEBI" id="CHEBI:29105"/>
        <note>structural</note>
    </ligand>
</feature>
<feature type="binding site" evidence="1">
    <location>
        <position position="153"/>
    </location>
    <ligand>
        <name>Zn(2+)</name>
        <dbReference type="ChEBI" id="CHEBI:29105"/>
        <note>structural</note>
    </ligand>
</feature>
<feature type="binding site" evidence="1">
    <location>
        <position position="160"/>
    </location>
    <ligand>
        <name>AMP</name>
        <dbReference type="ChEBI" id="CHEBI:456215"/>
    </ligand>
</feature>
<feature type="binding site" evidence="1">
    <location>
        <position position="171"/>
    </location>
    <ligand>
        <name>AMP</name>
        <dbReference type="ChEBI" id="CHEBI:456215"/>
    </ligand>
</feature>
<feature type="binding site" evidence="1">
    <location>
        <position position="199"/>
    </location>
    <ligand>
        <name>ATP</name>
        <dbReference type="ChEBI" id="CHEBI:30616"/>
    </ligand>
</feature>
<sequence length="216" mass="23797">MHIILMGPPGAGKGTQAVLLAGQEGIPHISTGDIFRAHMSQGTPLGKLAKEYVDAGKYVPDDVTNAMVRDRLAQPDCKKGFVLDGYPRTPEQARALDEMLAELGLALDAVINIDVPDELLVERAVGRRVCRSCGATYHVRFNPPREAGRCDRCGGELYQRSDDQEEKVAVRLNLYHSQTAPLLQFYKERGLVRTVRGDQPMDQVTADIKEAVRASR</sequence>
<gene>
    <name evidence="1" type="primary">adk</name>
    <name type="ordered locus">STH3054</name>
</gene>